<evidence type="ECO:0000255" key="1">
    <source>
        <dbReference type="HAMAP-Rule" id="MF_00051"/>
    </source>
</evidence>
<feature type="chain" id="PRO_0000234976" description="Serine hydroxymethyltransferase">
    <location>
        <begin position="1"/>
        <end position="421"/>
    </location>
</feature>
<feature type="binding site" evidence="1">
    <location>
        <position position="123"/>
    </location>
    <ligand>
        <name>(6S)-5,6,7,8-tetrahydrofolate</name>
        <dbReference type="ChEBI" id="CHEBI:57453"/>
    </ligand>
</feature>
<feature type="binding site" evidence="1">
    <location>
        <begin position="127"/>
        <end position="129"/>
    </location>
    <ligand>
        <name>(6S)-5,6,7,8-tetrahydrofolate</name>
        <dbReference type="ChEBI" id="CHEBI:57453"/>
    </ligand>
</feature>
<feature type="site" description="Plays an important role in substrate specificity" evidence="1">
    <location>
        <position position="231"/>
    </location>
</feature>
<feature type="modified residue" description="N6-(pyridoxal phosphate)lysine" evidence="1">
    <location>
        <position position="232"/>
    </location>
</feature>
<proteinExistence type="inferred from homology"/>
<gene>
    <name evidence="1" type="primary">glyA</name>
    <name type="ordered locus">Ecaj_0692</name>
</gene>
<accession>Q3YRD1</accession>
<keyword id="KW-0028">Amino-acid biosynthesis</keyword>
<keyword id="KW-0963">Cytoplasm</keyword>
<keyword id="KW-0554">One-carbon metabolism</keyword>
<keyword id="KW-0663">Pyridoxal phosphate</keyword>
<keyword id="KW-0808">Transferase</keyword>
<reference key="1">
    <citation type="journal article" date="2006" name="J. Bacteriol.">
        <title>The genome of the obligately intracellular bacterium Ehrlichia canis reveals themes of complex membrane structure and immune evasion strategies.</title>
        <authorList>
            <person name="Mavromatis K."/>
            <person name="Doyle C.K."/>
            <person name="Lykidis A."/>
            <person name="Ivanova N."/>
            <person name="Francino M.P."/>
            <person name="Chain P."/>
            <person name="Shin M."/>
            <person name="Malfatti S."/>
            <person name="Larimer F."/>
            <person name="Copeland A."/>
            <person name="Detter J.C."/>
            <person name="Land M."/>
            <person name="Richardson P.M."/>
            <person name="Yu X.J."/>
            <person name="Walker D.H."/>
            <person name="McBride J.W."/>
            <person name="Kyrpides N.C."/>
        </authorList>
    </citation>
    <scope>NUCLEOTIDE SEQUENCE [LARGE SCALE GENOMIC DNA]</scope>
    <source>
        <strain>Jake</strain>
    </source>
</reference>
<name>GLYA_EHRCJ</name>
<dbReference type="EC" id="2.1.2.1" evidence="1"/>
<dbReference type="EMBL" id="CP000107">
    <property type="protein sequence ID" value="AAZ68724.1"/>
    <property type="molecule type" value="Genomic_DNA"/>
</dbReference>
<dbReference type="RefSeq" id="WP_011304801.1">
    <property type="nucleotide sequence ID" value="NC_007354.1"/>
</dbReference>
<dbReference type="SMR" id="Q3YRD1"/>
<dbReference type="FunCoup" id="Q3YRD1">
    <property type="interactions" value="315"/>
</dbReference>
<dbReference type="STRING" id="269484.Ecaj_0692"/>
<dbReference type="KEGG" id="ecn:Ecaj_0692"/>
<dbReference type="eggNOG" id="COG0112">
    <property type="taxonomic scope" value="Bacteria"/>
</dbReference>
<dbReference type="HOGENOM" id="CLU_022477_2_1_5"/>
<dbReference type="InParanoid" id="Q3YRD1"/>
<dbReference type="UniPathway" id="UPA00193"/>
<dbReference type="UniPathway" id="UPA00288">
    <property type="reaction ID" value="UER01023"/>
</dbReference>
<dbReference type="Proteomes" id="UP000000435">
    <property type="component" value="Chromosome"/>
</dbReference>
<dbReference type="GO" id="GO:0005829">
    <property type="term" value="C:cytosol"/>
    <property type="evidence" value="ECO:0007669"/>
    <property type="project" value="TreeGrafter"/>
</dbReference>
<dbReference type="GO" id="GO:0004372">
    <property type="term" value="F:glycine hydroxymethyltransferase activity"/>
    <property type="evidence" value="ECO:0007669"/>
    <property type="project" value="UniProtKB-UniRule"/>
</dbReference>
<dbReference type="GO" id="GO:0030170">
    <property type="term" value="F:pyridoxal phosphate binding"/>
    <property type="evidence" value="ECO:0007669"/>
    <property type="project" value="UniProtKB-UniRule"/>
</dbReference>
<dbReference type="GO" id="GO:0019264">
    <property type="term" value="P:glycine biosynthetic process from serine"/>
    <property type="evidence" value="ECO:0007669"/>
    <property type="project" value="UniProtKB-UniRule"/>
</dbReference>
<dbReference type="GO" id="GO:0035999">
    <property type="term" value="P:tetrahydrofolate interconversion"/>
    <property type="evidence" value="ECO:0007669"/>
    <property type="project" value="UniProtKB-UniRule"/>
</dbReference>
<dbReference type="CDD" id="cd00378">
    <property type="entry name" value="SHMT"/>
    <property type="match status" value="1"/>
</dbReference>
<dbReference type="FunFam" id="3.40.640.10:FF:000001">
    <property type="entry name" value="Serine hydroxymethyltransferase"/>
    <property type="match status" value="1"/>
</dbReference>
<dbReference type="Gene3D" id="3.90.1150.10">
    <property type="entry name" value="Aspartate Aminotransferase, domain 1"/>
    <property type="match status" value="1"/>
</dbReference>
<dbReference type="Gene3D" id="3.40.640.10">
    <property type="entry name" value="Type I PLP-dependent aspartate aminotransferase-like (Major domain)"/>
    <property type="match status" value="1"/>
</dbReference>
<dbReference type="HAMAP" id="MF_00051">
    <property type="entry name" value="SHMT"/>
    <property type="match status" value="1"/>
</dbReference>
<dbReference type="InterPro" id="IPR015424">
    <property type="entry name" value="PyrdxlP-dep_Trfase"/>
</dbReference>
<dbReference type="InterPro" id="IPR015421">
    <property type="entry name" value="PyrdxlP-dep_Trfase_major"/>
</dbReference>
<dbReference type="InterPro" id="IPR015422">
    <property type="entry name" value="PyrdxlP-dep_Trfase_small"/>
</dbReference>
<dbReference type="InterPro" id="IPR001085">
    <property type="entry name" value="Ser_HO-MeTrfase"/>
</dbReference>
<dbReference type="InterPro" id="IPR049943">
    <property type="entry name" value="Ser_HO-MeTrfase-like"/>
</dbReference>
<dbReference type="InterPro" id="IPR019798">
    <property type="entry name" value="Ser_HO-MeTrfase_PLP_BS"/>
</dbReference>
<dbReference type="InterPro" id="IPR039429">
    <property type="entry name" value="SHMT-like_dom"/>
</dbReference>
<dbReference type="NCBIfam" id="NF000586">
    <property type="entry name" value="PRK00011.1"/>
    <property type="match status" value="1"/>
</dbReference>
<dbReference type="PANTHER" id="PTHR11680">
    <property type="entry name" value="SERINE HYDROXYMETHYLTRANSFERASE"/>
    <property type="match status" value="1"/>
</dbReference>
<dbReference type="PANTHER" id="PTHR11680:SF35">
    <property type="entry name" value="SERINE HYDROXYMETHYLTRANSFERASE 1"/>
    <property type="match status" value="1"/>
</dbReference>
<dbReference type="Pfam" id="PF00464">
    <property type="entry name" value="SHMT"/>
    <property type="match status" value="1"/>
</dbReference>
<dbReference type="PIRSF" id="PIRSF000412">
    <property type="entry name" value="SHMT"/>
    <property type="match status" value="1"/>
</dbReference>
<dbReference type="SUPFAM" id="SSF53383">
    <property type="entry name" value="PLP-dependent transferases"/>
    <property type="match status" value="1"/>
</dbReference>
<dbReference type="PROSITE" id="PS00096">
    <property type="entry name" value="SHMT"/>
    <property type="match status" value="1"/>
</dbReference>
<protein>
    <recommendedName>
        <fullName evidence="1">Serine hydroxymethyltransferase</fullName>
        <shortName evidence="1">SHMT</shortName>
        <shortName evidence="1">Serine methylase</shortName>
        <ecNumber evidence="1">2.1.2.1</ecNumber>
    </recommendedName>
</protein>
<comment type="function">
    <text evidence="1">Catalyzes the reversible interconversion of serine and glycine with tetrahydrofolate (THF) serving as the one-carbon carrier. This reaction serves as the major source of one-carbon groups required for the biosynthesis of purines, thymidylate, methionine, and other important biomolecules. Also exhibits THF-independent aldolase activity toward beta-hydroxyamino acids, producing glycine and aldehydes, via a retro-aldol mechanism.</text>
</comment>
<comment type="catalytic activity">
    <reaction evidence="1">
        <text>(6R)-5,10-methylene-5,6,7,8-tetrahydrofolate + glycine + H2O = (6S)-5,6,7,8-tetrahydrofolate + L-serine</text>
        <dbReference type="Rhea" id="RHEA:15481"/>
        <dbReference type="ChEBI" id="CHEBI:15377"/>
        <dbReference type="ChEBI" id="CHEBI:15636"/>
        <dbReference type="ChEBI" id="CHEBI:33384"/>
        <dbReference type="ChEBI" id="CHEBI:57305"/>
        <dbReference type="ChEBI" id="CHEBI:57453"/>
        <dbReference type="EC" id="2.1.2.1"/>
    </reaction>
</comment>
<comment type="cofactor">
    <cofactor evidence="1">
        <name>pyridoxal 5'-phosphate</name>
        <dbReference type="ChEBI" id="CHEBI:597326"/>
    </cofactor>
</comment>
<comment type="pathway">
    <text evidence="1">One-carbon metabolism; tetrahydrofolate interconversion.</text>
</comment>
<comment type="pathway">
    <text evidence="1">Amino-acid biosynthesis; glycine biosynthesis; glycine from L-serine: step 1/1.</text>
</comment>
<comment type="subunit">
    <text evidence="1">Homodimer.</text>
</comment>
<comment type="subcellular location">
    <subcellularLocation>
        <location evidence="1">Cytoplasm</location>
    </subcellularLocation>
</comment>
<comment type="similarity">
    <text evidence="1">Belongs to the SHMT family.</text>
</comment>
<organism>
    <name type="scientific">Ehrlichia canis (strain Jake)</name>
    <dbReference type="NCBI Taxonomy" id="269484"/>
    <lineage>
        <taxon>Bacteria</taxon>
        <taxon>Pseudomonadati</taxon>
        <taxon>Pseudomonadota</taxon>
        <taxon>Alphaproteobacteria</taxon>
        <taxon>Rickettsiales</taxon>
        <taxon>Anaplasmataceae</taxon>
        <taxon>Ehrlichia</taxon>
    </lineage>
</organism>
<sequence length="421" mass="46173">MVRYILDHNLQDIDVEVFDCISGELNRQNSQLQLIASENFVSKAVLEAQGSIFTNKYAEGYPGKRYYCGCHFADIVENIAIERLCKLFGCKFANVQPHSGSQANQGVFAALLKPGDTVVGLSLDCGGHLTHGSAPSISGKWFNAVQYQVDRNTGLLDMDEIEKLVLEHKPTLLIAGSSAYPRTIDFKRFREIADKVGAYLLADIAHYAGLIAAGEFPSPFEYAHVVTSTTHKTLRGPRGAVIMTNYEDIHKKIQSSIFPGMQGGPLMHVIAAKAVAFGEALKPDFKDYAKQIIKNSRVLVEVFKERGLNIVTDGTDSHIVLVDLRPKGVTGKDAVLALERLGIICNKNAIPFDTEKPFVTSGLRFGSAAETSRGLQESEFREIGNMVCDVIDNLKASDIVKASVEQDVIKKVKELTFAFIS</sequence>